<name>PAX_I83A1</name>
<gene>
    <name type="primary">PA</name>
</gene>
<reference key="1">
    <citation type="submission" date="2007-03" db="EMBL/GenBank/DDBJ databases">
        <title>The NIAID influenza genome sequencing project.</title>
        <authorList>
            <person name="Ghedin E."/>
            <person name="Spiro D."/>
            <person name="Miller N."/>
            <person name="Zaborsky J."/>
            <person name="Feldblyum T."/>
            <person name="Subbu V."/>
            <person name="Shumway M."/>
            <person name="Sparenborg J."/>
            <person name="Groveman L."/>
            <person name="Halpin R."/>
            <person name="Sitz J."/>
            <person name="Koo H."/>
            <person name="Salzberg S.L."/>
            <person name="Webster R.G."/>
            <person name="Hoffmann E."/>
            <person name="Krauss S."/>
            <person name="Naeve C."/>
            <person name="Bao Y."/>
            <person name="Bolotov P."/>
            <person name="Dernovoy D."/>
            <person name="Kiryutin B."/>
            <person name="Lipman D.J."/>
            <person name="Tatusova T."/>
        </authorList>
    </citation>
    <scope>NUCLEOTIDE SEQUENCE [GENOMIC RNA]</scope>
</reference>
<reference key="2">
    <citation type="submission" date="2007-03" db="EMBL/GenBank/DDBJ databases">
        <authorList>
            <consortium name="The NIAID Influenza Genome Sequencing Consortium"/>
        </authorList>
    </citation>
    <scope>NUCLEOTIDE SEQUENCE [GENOMIC RNA]</scope>
</reference>
<protein>
    <recommendedName>
        <fullName>Protein PA-X</fullName>
    </recommendedName>
</protein>
<organism>
    <name type="scientific">Influenza A virus (strain A/Chile/1/1983 H1N1)</name>
    <dbReference type="NCBI Taxonomy" id="380985"/>
    <lineage>
        <taxon>Viruses</taxon>
        <taxon>Riboviria</taxon>
        <taxon>Orthornavirae</taxon>
        <taxon>Negarnaviricota</taxon>
        <taxon>Polyploviricotina</taxon>
        <taxon>Insthoviricetes</taxon>
        <taxon>Articulavirales</taxon>
        <taxon>Orthomyxoviridae</taxon>
        <taxon>Alphainfluenzavirus</taxon>
        <taxon>Alphainfluenzavirus influenzae</taxon>
        <taxon>Influenza A virus</taxon>
    </lineage>
</organism>
<comment type="function">
    <text evidence="1 4">Plays a major role in the shutoff of the host protein expression by cleaving mRNAs probably via an endonuclease activity. This host shutoff allows the virus to escape from the host antiviral response (By similarity). Hijacks host RNA splicing machinery to selectively target host RNAs containing introns for destruction. This may explain the preferential degradation of RNAs that have undergone co- or post-transcriptional processing (By similarity).</text>
</comment>
<comment type="subcellular location">
    <subcellularLocation>
        <location evidence="4">Host cytoplasm</location>
    </subcellularLocation>
    <subcellularLocation>
        <location evidence="4">Host nucleus</location>
    </subcellularLocation>
</comment>
<comment type="alternative products">
    <event type="ribosomal frameshifting"/>
    <isoform>
        <id>P0CK78-1</id>
        <name>PA-X</name>
        <sequence type="displayed"/>
    </isoform>
    <isoform>
        <id>A4GCI2-1</id>
        <name>PA</name>
        <sequence type="external"/>
    </isoform>
</comment>
<comment type="domain">
    <text evidence="1 4">The probable endonuclease active site in the N-terminus and the basic amino acid cluster in the C-terminus are important for the shutoff activity. The C-terminus acts as a nuclear localization signal (By similarity). The C-terminus is recruited to host protein complexes involved in nuclear Pol II RNA processing (By similarity).</text>
</comment>
<comment type="similarity">
    <text evidence="5">Belongs to the influenza viruses PA-X family.</text>
</comment>
<proteinExistence type="inferred from homology"/>
<sequence>MEDFVRQCFNPMIVELAEKAMKEYGEDLKIETNKFAAICTHLEVCFMYSDFHFINEQGESIIVEPEDPNALLKHRFEIIEGRDRTMAWTVVNSICNTTGAEKPKFLPDLYDYKENRFIEIGVTRREVHIYYLEKANKIKSEKTHIHIFSFTGEEMATKADYTLDEESRARIKTRLFTIRQEMASRGLWDSFVSPREAKKQLKKDLKSQEQCAGSLTKVSRRTSPALRILEPMWMDSNRTATLRASFLKCPKK</sequence>
<dbReference type="EMBL" id="CY020442">
    <property type="status" value="NOT_ANNOTATED_CDS"/>
    <property type="molecule type" value="Viral_cRNA"/>
</dbReference>
<dbReference type="SMR" id="P0CK78"/>
<dbReference type="Proteomes" id="UP000008582">
    <property type="component" value="Genome"/>
</dbReference>
<dbReference type="GO" id="GO:0003723">
    <property type="term" value="F:RNA binding"/>
    <property type="evidence" value="ECO:0007669"/>
    <property type="project" value="InterPro"/>
</dbReference>
<dbReference type="GO" id="GO:0039694">
    <property type="term" value="P:viral RNA genome replication"/>
    <property type="evidence" value="ECO:0007669"/>
    <property type="project" value="InterPro"/>
</dbReference>
<dbReference type="GO" id="GO:0075523">
    <property type="term" value="P:viral translational frameshifting"/>
    <property type="evidence" value="ECO:0007669"/>
    <property type="project" value="UniProtKB-KW"/>
</dbReference>
<dbReference type="FunFam" id="3.40.91.90:FF:000001">
    <property type="entry name" value="Polymerase acidic protein"/>
    <property type="match status" value="1"/>
</dbReference>
<dbReference type="Gene3D" id="3.40.91.90">
    <property type="entry name" value="Influenza RNA-dependent RNA polymerase subunit PA, endonuclease domain"/>
    <property type="match status" value="1"/>
</dbReference>
<dbReference type="InterPro" id="IPR001009">
    <property type="entry name" value="PA/PA-X"/>
</dbReference>
<dbReference type="InterPro" id="IPR038372">
    <property type="entry name" value="PA/PA-X_sf"/>
</dbReference>
<dbReference type="Pfam" id="PF00603">
    <property type="entry name" value="Flu_PA"/>
    <property type="match status" value="1"/>
</dbReference>
<feature type="chain" id="PRO_0000419361" description="Protein PA-X">
    <location>
        <begin position="1"/>
        <end position="252"/>
    </location>
</feature>
<feature type="active site" evidence="2">
    <location>
        <position position="80"/>
    </location>
</feature>
<feature type="active site" evidence="2">
    <location>
        <position position="108"/>
    </location>
</feature>
<feature type="site" description="Important for efficient shutoff activity and nuclear localization" evidence="4">
    <location>
        <position position="195"/>
    </location>
</feature>
<feature type="site" description="Important for efficient shutoff activity and nuclear localization" evidence="4">
    <location>
        <position position="198"/>
    </location>
</feature>
<feature type="site" description="Important for efficient shutoff activity and nuclear localization" evidence="4">
    <location>
        <position position="199"/>
    </location>
</feature>
<feature type="site" description="Important for efficient shutoff activity" evidence="3">
    <location>
        <position position="202"/>
    </location>
</feature>
<feature type="site" description="Important for efficient shutoff activity" evidence="3">
    <location>
        <position position="203"/>
    </location>
</feature>
<feature type="site" description="Important for efficient shutoff activity" evidence="3">
    <location>
        <position position="206"/>
    </location>
</feature>
<keyword id="KW-1132">Decay of host mRNAs by virus</keyword>
<keyword id="KW-1262">Eukaryotic host gene expression shutoff by virus</keyword>
<keyword id="KW-1035">Host cytoplasm</keyword>
<keyword id="KW-1190">Host gene expression shutoff by virus</keyword>
<keyword id="KW-1192">Host mRNA suppression by virus</keyword>
<keyword id="KW-1048">Host nucleus</keyword>
<keyword id="KW-0945">Host-virus interaction</keyword>
<keyword id="KW-0688">Ribosomal frameshifting</keyword>
<organismHost>
    <name type="scientific">Aves</name>
    <dbReference type="NCBI Taxonomy" id="8782"/>
</organismHost>
<organismHost>
    <name type="scientific">Homo sapiens</name>
    <name type="common">Human</name>
    <dbReference type="NCBI Taxonomy" id="9606"/>
</organismHost>
<organismHost>
    <name type="scientific">Sus scrofa</name>
    <name type="common">Pig</name>
    <dbReference type="NCBI Taxonomy" id="9823"/>
</organismHost>
<evidence type="ECO:0000250" key="1">
    <source>
        <dbReference type="UniProtKB" id="P0CK64"/>
    </source>
</evidence>
<evidence type="ECO:0000250" key="2">
    <source>
        <dbReference type="UniProtKB" id="P0CK68"/>
    </source>
</evidence>
<evidence type="ECO:0000250" key="3">
    <source>
        <dbReference type="UniProtKB" id="P0DJW8"/>
    </source>
</evidence>
<evidence type="ECO:0000250" key="4">
    <source>
        <dbReference type="UniProtKB" id="P0DXO5"/>
    </source>
</evidence>
<evidence type="ECO:0000305" key="5"/>
<accession>P0CK78</accession>